<proteinExistence type="evidence at protein level"/>
<keyword id="KW-1003">Cell membrane</keyword>
<keyword id="KW-0472">Membrane</keyword>
<keyword id="KW-1185">Reference proteome</keyword>
<keyword id="KW-0762">Sugar transport</keyword>
<keyword id="KW-0769">Symport</keyword>
<keyword id="KW-0812">Transmembrane</keyword>
<keyword id="KW-1133">Transmembrane helix</keyword>
<keyword id="KW-0813">Transport</keyword>
<name>STP11_ARATH</name>
<protein>
    <recommendedName>
        <fullName>Sugar transport protein 11</fullName>
    </recommendedName>
    <alternativeName>
        <fullName>Hexose transporter 11</fullName>
    </alternativeName>
</protein>
<comment type="function">
    <text evidence="2">Mediates an active uptake of hexoses, probably by sugar/hydrogen symport. Can transport glucose, galactose, mannose, xylose and 3-O-methylglucose, but not fructose and ribose.</text>
</comment>
<comment type="activity regulation">
    <text evidence="2">Inhibited by uncouplers such as 2,4-dinitrophenol and carbonyl cyanide-m-chlorophenyl-hydrazone.</text>
</comment>
<comment type="biophysicochemical properties">
    <kinetics>
        <KM evidence="2">25 uM for glucose (at pH 5.5)</KM>
    </kinetics>
    <phDependence>
        <text evidence="2">Optimum pH is 5.5.</text>
    </phDependence>
</comment>
<comment type="subcellular location">
    <subcellularLocation>
        <location evidence="2">Cell membrane</location>
        <topology evidence="2">Multi-pass membrane protein</topology>
    </subcellularLocation>
</comment>
<comment type="tissue specificity">
    <text evidence="2">Specifically expressed in germinating pollen and pollen tube (at protein level).</text>
</comment>
<comment type="similarity">
    <text evidence="3">Belongs to the major facilitator superfamily. Sugar transporter (TC 2.A.1.1) family.</text>
</comment>
<evidence type="ECO:0000255" key="1"/>
<evidence type="ECO:0000269" key="2">
    <source>
    </source>
</evidence>
<evidence type="ECO:0000305" key="3"/>
<dbReference type="EMBL" id="AJ344339">
    <property type="protein sequence ID" value="CAC69075.1"/>
    <property type="molecule type" value="mRNA"/>
</dbReference>
<dbReference type="EMBL" id="AB007648">
    <property type="protein sequence ID" value="BAB11182.1"/>
    <property type="molecule type" value="Genomic_DNA"/>
</dbReference>
<dbReference type="EMBL" id="CP002688">
    <property type="protein sequence ID" value="AED93146.1"/>
    <property type="molecule type" value="Genomic_DNA"/>
</dbReference>
<dbReference type="EMBL" id="AK175890">
    <property type="protein sequence ID" value="BAD43653.1"/>
    <property type="molecule type" value="mRNA"/>
</dbReference>
<dbReference type="EMBL" id="AJ001664">
    <property type="protein sequence ID" value="CAA04909.1"/>
    <property type="molecule type" value="Genomic_DNA"/>
</dbReference>
<dbReference type="RefSeq" id="NP_197718.1">
    <property type="nucleotide sequence ID" value="NM_122233.4"/>
</dbReference>
<dbReference type="SMR" id="Q9FMX3"/>
<dbReference type="FunCoup" id="Q9FMX3">
    <property type="interactions" value="150"/>
</dbReference>
<dbReference type="STRING" id="3702.Q9FMX3"/>
<dbReference type="TCDB" id="2.A.1.1.61">
    <property type="family name" value="the major facilitator superfamily (mfs)"/>
</dbReference>
<dbReference type="GlyGen" id="Q9FMX3">
    <property type="glycosylation" value="1 site"/>
</dbReference>
<dbReference type="PaxDb" id="3702-AT5G23270.1"/>
<dbReference type="EnsemblPlants" id="AT5G23270.1">
    <property type="protein sequence ID" value="AT5G23270.1"/>
    <property type="gene ID" value="AT5G23270"/>
</dbReference>
<dbReference type="GeneID" id="832391"/>
<dbReference type="Gramene" id="AT5G23270.1">
    <property type="protein sequence ID" value="AT5G23270.1"/>
    <property type="gene ID" value="AT5G23270"/>
</dbReference>
<dbReference type="KEGG" id="ath:AT5G23270"/>
<dbReference type="Araport" id="AT5G23270"/>
<dbReference type="TAIR" id="AT5G23270">
    <property type="gene designation" value="STP11"/>
</dbReference>
<dbReference type="eggNOG" id="KOG0254">
    <property type="taxonomic scope" value="Eukaryota"/>
</dbReference>
<dbReference type="HOGENOM" id="CLU_001265_30_5_1"/>
<dbReference type="InParanoid" id="Q9FMX3"/>
<dbReference type="OMA" id="ICTATHW"/>
<dbReference type="PhylomeDB" id="Q9FMX3"/>
<dbReference type="PRO" id="PR:Q9FMX3"/>
<dbReference type="Proteomes" id="UP000006548">
    <property type="component" value="Chromosome 5"/>
</dbReference>
<dbReference type="ExpressionAtlas" id="Q9FMX3">
    <property type="expression patterns" value="baseline and differential"/>
</dbReference>
<dbReference type="GO" id="GO:0005886">
    <property type="term" value="C:plasma membrane"/>
    <property type="evidence" value="ECO:0007669"/>
    <property type="project" value="UniProtKB-SubCell"/>
</dbReference>
<dbReference type="GO" id="GO:0090406">
    <property type="term" value="C:pollen tube"/>
    <property type="evidence" value="ECO:0000314"/>
    <property type="project" value="TAIR"/>
</dbReference>
<dbReference type="GO" id="GO:0015145">
    <property type="term" value="F:monosaccharide transmembrane transporter activity"/>
    <property type="evidence" value="ECO:0007669"/>
    <property type="project" value="InterPro"/>
</dbReference>
<dbReference type="GO" id="GO:0015293">
    <property type="term" value="F:symporter activity"/>
    <property type="evidence" value="ECO:0007669"/>
    <property type="project" value="UniProtKB-KW"/>
</dbReference>
<dbReference type="CDD" id="cd17361">
    <property type="entry name" value="MFS_STP"/>
    <property type="match status" value="1"/>
</dbReference>
<dbReference type="FunFam" id="1.20.1250.20:FF:000002">
    <property type="entry name" value="Sugar transport protein 13"/>
    <property type="match status" value="1"/>
</dbReference>
<dbReference type="Gene3D" id="1.20.1250.20">
    <property type="entry name" value="MFS general substrate transporter like domains"/>
    <property type="match status" value="1"/>
</dbReference>
<dbReference type="InterPro" id="IPR020846">
    <property type="entry name" value="MFS_dom"/>
</dbReference>
<dbReference type="InterPro" id="IPR044778">
    <property type="entry name" value="MFS_STP/MST-like_plant"/>
</dbReference>
<dbReference type="InterPro" id="IPR005828">
    <property type="entry name" value="MFS_sugar_transport-like"/>
</dbReference>
<dbReference type="InterPro" id="IPR036259">
    <property type="entry name" value="MFS_trans_sf"/>
</dbReference>
<dbReference type="InterPro" id="IPR045262">
    <property type="entry name" value="STP/PLT_plant"/>
</dbReference>
<dbReference type="InterPro" id="IPR003663">
    <property type="entry name" value="Sugar/inositol_transpt"/>
</dbReference>
<dbReference type="InterPro" id="IPR005829">
    <property type="entry name" value="Sugar_transporter_CS"/>
</dbReference>
<dbReference type="NCBIfam" id="TIGR00879">
    <property type="entry name" value="SP"/>
    <property type="match status" value="1"/>
</dbReference>
<dbReference type="PANTHER" id="PTHR23500">
    <property type="entry name" value="SOLUTE CARRIER FAMILY 2, FACILITATED GLUCOSE TRANSPORTER"/>
    <property type="match status" value="1"/>
</dbReference>
<dbReference type="PANTHER" id="PTHR23500:SF460">
    <property type="entry name" value="SUGAR TRANSPORT PROTEIN 11"/>
    <property type="match status" value="1"/>
</dbReference>
<dbReference type="Pfam" id="PF00083">
    <property type="entry name" value="Sugar_tr"/>
    <property type="match status" value="1"/>
</dbReference>
<dbReference type="PRINTS" id="PR00171">
    <property type="entry name" value="SUGRTRNSPORT"/>
</dbReference>
<dbReference type="SUPFAM" id="SSF103473">
    <property type="entry name" value="MFS general substrate transporter"/>
    <property type="match status" value="1"/>
</dbReference>
<dbReference type="PROSITE" id="PS50850">
    <property type="entry name" value="MFS"/>
    <property type="match status" value="1"/>
</dbReference>
<dbReference type="PROSITE" id="PS00216">
    <property type="entry name" value="SUGAR_TRANSPORT_1"/>
    <property type="match status" value="1"/>
</dbReference>
<dbReference type="PROSITE" id="PS00217">
    <property type="entry name" value="SUGAR_TRANSPORT_2"/>
    <property type="match status" value="1"/>
</dbReference>
<sequence length="514" mass="56725">MAGGAFIDESGHGGDYEGRVTAFVMITCIVAAMGGLLFGYDIGISGGVISMEDFLTKFFPDVLRQMQNKRGRETEYCKYDNELLTLFTSSLYLAALFASFLASTITRLFGRKVSMVIGSLAFLSGALLNGLAINLEMLIIGRLFLGVGVGFANQSVPLYLSEMAPAKIRGALNIGFQLAITIGILAANIVNYVTPKLQNGIGWRLSLGLAGVPAVMMLVGCFFLPDTPNSILERGNKEKAKEMLQKIRGTMEVEHEFNELCNACEAAKKVKHPWTNIMQARYRPQLTFCTFIPFFQQLTGINVIMFYAPVLFKTIGFGNDASLISAVITGLVNVLSTIVSIYSVDKFGRRALFLQGGFQMIVTQIAVGSMIGWKFGFNGEGNLSGVDADIILALICLYVAGFAWSWGPLGWLVPSEICPLEIRSAGQSLNVSVNMFFTFFIGQFFLTMLCHMKFGLFYFFAGMVLIMTIFIYFLLPETKGVPIEEMGKVWKEHRYWGKYSNNDDGDDVDDDAYF</sequence>
<feature type="chain" id="PRO_0000050441" description="Sugar transport protein 11">
    <location>
        <begin position="1"/>
        <end position="514"/>
    </location>
</feature>
<feature type="topological domain" description="Cytoplasmic" evidence="1">
    <location>
        <begin position="1"/>
        <end position="19"/>
    </location>
</feature>
<feature type="transmembrane region" description="Helical; Name=1" evidence="1">
    <location>
        <begin position="20"/>
        <end position="40"/>
    </location>
</feature>
<feature type="topological domain" description="Extracellular" evidence="1">
    <location>
        <begin position="41"/>
        <end position="82"/>
    </location>
</feature>
<feature type="transmembrane region" description="Helical; Name=2" evidence="1">
    <location>
        <begin position="83"/>
        <end position="103"/>
    </location>
</feature>
<feature type="topological domain" description="Cytoplasmic" evidence="1">
    <location>
        <begin position="104"/>
        <end position="112"/>
    </location>
</feature>
<feature type="transmembrane region" description="Helical; Name=3" evidence="1">
    <location>
        <begin position="113"/>
        <end position="133"/>
    </location>
</feature>
<feature type="topological domain" description="Extracellular" evidence="1">
    <location>
        <begin position="134"/>
        <end position="137"/>
    </location>
</feature>
<feature type="transmembrane region" description="Helical; Name=4" evidence="1">
    <location>
        <begin position="138"/>
        <end position="158"/>
    </location>
</feature>
<feature type="topological domain" description="Cytoplasmic" evidence="1">
    <location>
        <begin position="159"/>
        <end position="169"/>
    </location>
</feature>
<feature type="transmembrane region" description="Helical; Name=5" evidence="1">
    <location>
        <begin position="170"/>
        <end position="190"/>
    </location>
</feature>
<feature type="topological domain" description="Extracellular" evidence="1">
    <location>
        <begin position="191"/>
        <end position="204"/>
    </location>
</feature>
<feature type="transmembrane region" description="Helical; Name=6" evidence="1">
    <location>
        <begin position="205"/>
        <end position="225"/>
    </location>
</feature>
<feature type="topological domain" description="Cytoplasmic" evidence="1">
    <location>
        <begin position="226"/>
        <end position="290"/>
    </location>
</feature>
<feature type="transmembrane region" description="Helical; Name=7" evidence="1">
    <location>
        <begin position="291"/>
        <end position="311"/>
    </location>
</feature>
<feature type="topological domain" description="Extracellular" evidence="1">
    <location>
        <begin position="312"/>
        <end position="320"/>
    </location>
</feature>
<feature type="transmembrane region" description="Helical; Name=8" evidence="1">
    <location>
        <begin position="321"/>
        <end position="341"/>
    </location>
</feature>
<feature type="topological domain" description="Cytoplasmic" evidence="1">
    <location>
        <begin position="342"/>
        <end position="350"/>
    </location>
</feature>
<feature type="transmembrane region" description="Helical; Name=9" evidence="1">
    <location>
        <begin position="351"/>
        <end position="371"/>
    </location>
</feature>
<feature type="topological domain" description="Extracellular" evidence="1">
    <location>
        <begin position="372"/>
        <end position="389"/>
    </location>
</feature>
<feature type="transmembrane region" description="Helical; Name=10" evidence="1">
    <location>
        <begin position="390"/>
        <end position="410"/>
    </location>
</feature>
<feature type="topological domain" description="Cytoplasmic" evidence="1">
    <location>
        <begin position="411"/>
        <end position="428"/>
    </location>
</feature>
<feature type="transmembrane region" description="Helical; Name=11" evidence="1">
    <location>
        <begin position="429"/>
        <end position="449"/>
    </location>
</feature>
<feature type="topological domain" description="Extracellular" evidence="1">
    <location>
        <begin position="450"/>
        <end position="453"/>
    </location>
</feature>
<feature type="transmembrane region" description="Helical; Name=12" evidence="1">
    <location>
        <begin position="454"/>
        <end position="474"/>
    </location>
</feature>
<feature type="topological domain" description="Cytoplasmic" evidence="1">
    <location>
        <begin position="475"/>
        <end position="514"/>
    </location>
</feature>
<accession>Q9FMX3</accession>
<accession>O81708</accession>
<reference key="1">
    <citation type="journal article" date="2005" name="Planta">
        <title>AtSTP11, a pollen tube-specific monosaccharide transporter in Arabidopsis.</title>
        <authorList>
            <person name="Schneidereit A."/>
            <person name="Scholz-Starke J."/>
            <person name="Sauer N."/>
            <person name="Buettner M."/>
        </authorList>
    </citation>
    <scope>NUCLEOTIDE SEQUENCE [MRNA]</scope>
    <scope>FUNCTION</scope>
    <scope>ACTIVITY REGULATION</scope>
    <scope>BIOPHYSICOCHEMICAL PROPERTIES</scope>
    <scope>SUBCELLULAR LOCATION</scope>
    <scope>TISSUE SPECIFICITY</scope>
    <source>
        <tissue>Flower</tissue>
    </source>
</reference>
<reference key="2">
    <citation type="journal article" date="1997" name="DNA Res.">
        <title>Structural analysis of Arabidopsis thaliana chromosome 5. III. Sequence features of the regions of 1,191,918 bp covered by seventeen physically assigned P1 clones.</title>
        <authorList>
            <person name="Nakamura Y."/>
            <person name="Sato S."/>
            <person name="Kaneko T."/>
            <person name="Kotani H."/>
            <person name="Asamizu E."/>
            <person name="Miyajima N."/>
            <person name="Tabata S."/>
        </authorList>
    </citation>
    <scope>NUCLEOTIDE SEQUENCE [LARGE SCALE GENOMIC DNA]</scope>
    <source>
        <strain>cv. Columbia</strain>
    </source>
</reference>
<reference key="3">
    <citation type="journal article" date="2017" name="Plant J.">
        <title>Araport11: a complete reannotation of the Arabidopsis thaliana reference genome.</title>
        <authorList>
            <person name="Cheng C.Y."/>
            <person name="Krishnakumar V."/>
            <person name="Chan A.P."/>
            <person name="Thibaud-Nissen F."/>
            <person name="Schobel S."/>
            <person name="Town C.D."/>
        </authorList>
    </citation>
    <scope>GENOME REANNOTATION</scope>
    <source>
        <strain>cv. Columbia</strain>
    </source>
</reference>
<reference key="4">
    <citation type="submission" date="2004-09" db="EMBL/GenBank/DDBJ databases">
        <title>Large-scale analysis of RIKEN Arabidopsis full-length (RAFL) cDNAs.</title>
        <authorList>
            <person name="Totoki Y."/>
            <person name="Seki M."/>
            <person name="Ishida J."/>
            <person name="Nakajima M."/>
            <person name="Enju A."/>
            <person name="Kamiya A."/>
            <person name="Narusaka M."/>
            <person name="Shin-i T."/>
            <person name="Nakagawa M."/>
            <person name="Sakamoto N."/>
            <person name="Oishi K."/>
            <person name="Kohara Y."/>
            <person name="Kobayashi M."/>
            <person name="Toyoda A."/>
            <person name="Sakaki Y."/>
            <person name="Sakurai T."/>
            <person name="Iida K."/>
            <person name="Akiyama K."/>
            <person name="Satou M."/>
            <person name="Toyoda T."/>
            <person name="Konagaya A."/>
            <person name="Carninci P."/>
            <person name="Kawai J."/>
            <person name="Hayashizaki Y."/>
            <person name="Shinozaki K."/>
        </authorList>
    </citation>
    <scope>NUCLEOTIDE SEQUENCE [LARGE SCALE MRNA]</scope>
    <source>
        <strain>cv. Columbia</strain>
    </source>
</reference>
<reference key="5">
    <citation type="submission" date="1997-09" db="EMBL/GenBank/DDBJ databases">
        <authorList>
            <person name="Baier K."/>
            <person name="Truernit E."/>
            <person name="Sauer N."/>
        </authorList>
    </citation>
    <scope>NUCLEOTIDE SEQUENCE [GENOMIC DNA] OF 408-475</scope>
    <source>
        <strain>cv. C24</strain>
    </source>
</reference>
<reference key="6">
    <citation type="journal article" date="2006" name="BMC Evol. Biol.">
        <title>The monosaccharide transporter gene family in land plants is ancient and shows differential subfamily expression and expansion across lineages.</title>
        <authorList>
            <person name="Johnson D.A."/>
            <person name="Hill J.P."/>
            <person name="Thomas M.A."/>
        </authorList>
    </citation>
    <scope>GENE FAMILY</scope>
</reference>
<organism>
    <name type="scientific">Arabidopsis thaliana</name>
    <name type="common">Mouse-ear cress</name>
    <dbReference type="NCBI Taxonomy" id="3702"/>
    <lineage>
        <taxon>Eukaryota</taxon>
        <taxon>Viridiplantae</taxon>
        <taxon>Streptophyta</taxon>
        <taxon>Embryophyta</taxon>
        <taxon>Tracheophyta</taxon>
        <taxon>Spermatophyta</taxon>
        <taxon>Magnoliopsida</taxon>
        <taxon>eudicotyledons</taxon>
        <taxon>Gunneridae</taxon>
        <taxon>Pentapetalae</taxon>
        <taxon>rosids</taxon>
        <taxon>malvids</taxon>
        <taxon>Brassicales</taxon>
        <taxon>Brassicaceae</taxon>
        <taxon>Camelineae</taxon>
        <taxon>Arabidopsis</taxon>
    </lineage>
</organism>
<gene>
    <name type="primary">STP11</name>
    <name type="ordered locus">At5g23270</name>
    <name type="ORF">MKD15.13</name>
</gene>